<accession>P47372</accession>
<comment type="function">
    <text evidence="1">Catalyzes the attachment of tryptophan to tRNA(Trp).</text>
</comment>
<comment type="catalytic activity">
    <reaction evidence="1">
        <text>tRNA(Trp) + L-tryptophan + ATP = L-tryptophyl-tRNA(Trp) + AMP + diphosphate + H(+)</text>
        <dbReference type="Rhea" id="RHEA:24080"/>
        <dbReference type="Rhea" id="RHEA-COMP:9671"/>
        <dbReference type="Rhea" id="RHEA-COMP:9705"/>
        <dbReference type="ChEBI" id="CHEBI:15378"/>
        <dbReference type="ChEBI" id="CHEBI:30616"/>
        <dbReference type="ChEBI" id="CHEBI:33019"/>
        <dbReference type="ChEBI" id="CHEBI:57912"/>
        <dbReference type="ChEBI" id="CHEBI:78442"/>
        <dbReference type="ChEBI" id="CHEBI:78535"/>
        <dbReference type="ChEBI" id="CHEBI:456215"/>
        <dbReference type="EC" id="6.1.1.2"/>
    </reaction>
</comment>
<comment type="subunit">
    <text evidence="1">Homodimer.</text>
</comment>
<comment type="subcellular location">
    <subcellularLocation>
        <location evidence="1">Cytoplasm</location>
    </subcellularLocation>
</comment>
<comment type="similarity">
    <text evidence="1">Belongs to the class-I aminoacyl-tRNA synthetase family.</text>
</comment>
<evidence type="ECO:0000255" key="1">
    <source>
        <dbReference type="HAMAP-Rule" id="MF_00140"/>
    </source>
</evidence>
<dbReference type="EC" id="6.1.1.2" evidence="1"/>
<dbReference type="EMBL" id="L43967">
    <property type="protein sequence ID" value="AAC71344.1"/>
    <property type="molecule type" value="Genomic_DNA"/>
</dbReference>
<dbReference type="PIR" id="I64213">
    <property type="entry name" value="I64213"/>
</dbReference>
<dbReference type="RefSeq" id="WP_009885680.1">
    <property type="nucleotide sequence ID" value="NC_000908.2"/>
</dbReference>
<dbReference type="SMR" id="P47372"/>
<dbReference type="FunCoup" id="P47372">
    <property type="interactions" value="174"/>
</dbReference>
<dbReference type="STRING" id="243273.MG_126"/>
<dbReference type="GeneID" id="88282250"/>
<dbReference type="KEGG" id="mge:MG_126"/>
<dbReference type="eggNOG" id="COG0180">
    <property type="taxonomic scope" value="Bacteria"/>
</dbReference>
<dbReference type="HOGENOM" id="CLU_029244_1_1_14"/>
<dbReference type="InParanoid" id="P47372"/>
<dbReference type="OrthoDB" id="9801042at2"/>
<dbReference type="BioCyc" id="MGEN243273:G1GJ2-139-MONOMER"/>
<dbReference type="Proteomes" id="UP000000807">
    <property type="component" value="Chromosome"/>
</dbReference>
<dbReference type="GO" id="GO:0005829">
    <property type="term" value="C:cytosol"/>
    <property type="evidence" value="ECO:0000318"/>
    <property type="project" value="GO_Central"/>
</dbReference>
<dbReference type="GO" id="GO:0005524">
    <property type="term" value="F:ATP binding"/>
    <property type="evidence" value="ECO:0007669"/>
    <property type="project" value="UniProtKB-UniRule"/>
</dbReference>
<dbReference type="GO" id="GO:0004830">
    <property type="term" value="F:tryptophan-tRNA ligase activity"/>
    <property type="evidence" value="ECO:0000318"/>
    <property type="project" value="GO_Central"/>
</dbReference>
<dbReference type="GO" id="GO:0006436">
    <property type="term" value="P:tryptophanyl-tRNA aminoacylation"/>
    <property type="evidence" value="ECO:0000318"/>
    <property type="project" value="GO_Central"/>
</dbReference>
<dbReference type="CDD" id="cd00806">
    <property type="entry name" value="TrpRS_core"/>
    <property type="match status" value="1"/>
</dbReference>
<dbReference type="Gene3D" id="3.40.50.620">
    <property type="entry name" value="HUPs"/>
    <property type="match status" value="1"/>
</dbReference>
<dbReference type="Gene3D" id="1.10.240.10">
    <property type="entry name" value="Tyrosyl-Transfer RNA Synthetase"/>
    <property type="match status" value="1"/>
</dbReference>
<dbReference type="HAMAP" id="MF_00140_B">
    <property type="entry name" value="Trp_tRNA_synth_B"/>
    <property type="match status" value="1"/>
</dbReference>
<dbReference type="InterPro" id="IPR002305">
    <property type="entry name" value="aa-tRNA-synth_Ic"/>
</dbReference>
<dbReference type="InterPro" id="IPR014729">
    <property type="entry name" value="Rossmann-like_a/b/a_fold"/>
</dbReference>
<dbReference type="InterPro" id="IPR002306">
    <property type="entry name" value="Trp-tRNA-ligase"/>
</dbReference>
<dbReference type="InterPro" id="IPR024109">
    <property type="entry name" value="Trp-tRNA-ligase_bac-type"/>
</dbReference>
<dbReference type="InterPro" id="IPR050203">
    <property type="entry name" value="Trp-tRNA_synthetase"/>
</dbReference>
<dbReference type="NCBIfam" id="TIGR00233">
    <property type="entry name" value="trpS"/>
    <property type="match status" value="1"/>
</dbReference>
<dbReference type="PANTHER" id="PTHR43766">
    <property type="entry name" value="TRYPTOPHAN--TRNA LIGASE, MITOCHONDRIAL"/>
    <property type="match status" value="1"/>
</dbReference>
<dbReference type="PANTHER" id="PTHR43766:SF1">
    <property type="entry name" value="TRYPTOPHAN--TRNA LIGASE, MITOCHONDRIAL"/>
    <property type="match status" value="1"/>
</dbReference>
<dbReference type="Pfam" id="PF00579">
    <property type="entry name" value="tRNA-synt_1b"/>
    <property type="match status" value="1"/>
</dbReference>
<dbReference type="PRINTS" id="PR01039">
    <property type="entry name" value="TRNASYNTHTRP"/>
</dbReference>
<dbReference type="SUPFAM" id="SSF52374">
    <property type="entry name" value="Nucleotidylyl transferase"/>
    <property type="match status" value="1"/>
</dbReference>
<name>SYW_MYCGE</name>
<sequence length="347" mass="39328">MIKRAITGIQASGRQHLGNFLGVMQGLKQLQSQYQLFLFVADLHAITVDFEPTMLKDNNLQLVKTLLALGLDYGKVNLFLQSDLMEHTMLGYLMLTQSNLGELQRMTQFKTKKLAQKRNSNNTITIPTGLLTYPVLMAADILLYQPDIVPVGNDQKQHLELTNDLAKRVAKKFKLKLKLPVFIENKDTNRIMDLSNPLKKMSKSNPDQNGVIYLDDSKETIIKKVRKATTDSFNKIRFAKKTQPGVTNLLVILTALLKEEVNHNLSKKIGSDLVKYYQNKSYLDLKNDLSSAVINVIESLKFKKAQITDEMVLKVLNDGKNQAKKVADETLKMFYKAFGLTSNQLFD</sequence>
<proteinExistence type="inferred from homology"/>
<protein>
    <recommendedName>
        <fullName evidence="1">Tryptophan--tRNA ligase</fullName>
        <ecNumber evidence="1">6.1.1.2</ecNumber>
    </recommendedName>
    <alternativeName>
        <fullName evidence="1">Tryptophanyl-tRNA synthetase</fullName>
        <shortName evidence="1">TrpRS</shortName>
    </alternativeName>
</protein>
<gene>
    <name evidence="1" type="primary">trpS</name>
    <name type="ordered locus">MG126</name>
</gene>
<reference key="1">
    <citation type="journal article" date="1995" name="Science">
        <title>The minimal gene complement of Mycoplasma genitalium.</title>
        <authorList>
            <person name="Fraser C.M."/>
            <person name="Gocayne J.D."/>
            <person name="White O."/>
            <person name="Adams M.D."/>
            <person name="Clayton R.A."/>
            <person name="Fleischmann R.D."/>
            <person name="Bult C.J."/>
            <person name="Kerlavage A.R."/>
            <person name="Sutton G.G."/>
            <person name="Kelley J.M."/>
            <person name="Fritchman J.L."/>
            <person name="Weidman J.F."/>
            <person name="Small K.V."/>
            <person name="Sandusky M."/>
            <person name="Fuhrmann J.L."/>
            <person name="Nguyen D.T."/>
            <person name="Utterback T.R."/>
            <person name="Saudek D.M."/>
            <person name="Phillips C.A."/>
            <person name="Merrick J.M."/>
            <person name="Tomb J.-F."/>
            <person name="Dougherty B.A."/>
            <person name="Bott K.F."/>
            <person name="Hu P.-C."/>
            <person name="Lucier T.S."/>
            <person name="Peterson S.N."/>
            <person name="Smith H.O."/>
            <person name="Hutchison C.A. III"/>
            <person name="Venter J.C."/>
        </authorList>
    </citation>
    <scope>NUCLEOTIDE SEQUENCE [LARGE SCALE GENOMIC DNA]</scope>
    <source>
        <strain>ATCC 33530 / DSM 19775 / NCTC 10195 / G37</strain>
    </source>
</reference>
<keyword id="KW-0030">Aminoacyl-tRNA synthetase</keyword>
<keyword id="KW-0067">ATP-binding</keyword>
<keyword id="KW-0963">Cytoplasm</keyword>
<keyword id="KW-0436">Ligase</keyword>
<keyword id="KW-0547">Nucleotide-binding</keyword>
<keyword id="KW-0648">Protein biosynthesis</keyword>
<keyword id="KW-1185">Reference proteome</keyword>
<organism>
    <name type="scientific">Mycoplasma genitalium (strain ATCC 33530 / DSM 19775 / NCTC 10195 / G37)</name>
    <name type="common">Mycoplasmoides genitalium</name>
    <dbReference type="NCBI Taxonomy" id="243273"/>
    <lineage>
        <taxon>Bacteria</taxon>
        <taxon>Bacillati</taxon>
        <taxon>Mycoplasmatota</taxon>
        <taxon>Mycoplasmoidales</taxon>
        <taxon>Mycoplasmoidaceae</taxon>
        <taxon>Mycoplasmoides</taxon>
    </lineage>
</organism>
<feature type="chain" id="PRO_0000136646" description="Tryptophan--tRNA ligase">
    <location>
        <begin position="1"/>
        <end position="347"/>
    </location>
</feature>
<feature type="short sequence motif" description="'HIGH' region" evidence="1">
    <location>
        <begin position="11"/>
        <end position="19"/>
    </location>
</feature>
<feature type="short sequence motif" description="'KMSKS' region" evidence="1">
    <location>
        <begin position="200"/>
        <end position="204"/>
    </location>
</feature>
<feature type="binding site" evidence="1">
    <location>
        <begin position="10"/>
        <end position="12"/>
    </location>
    <ligand>
        <name>ATP</name>
        <dbReference type="ChEBI" id="CHEBI:30616"/>
    </ligand>
</feature>
<feature type="binding site" evidence="1">
    <location>
        <begin position="18"/>
        <end position="19"/>
    </location>
    <ligand>
        <name>ATP</name>
        <dbReference type="ChEBI" id="CHEBI:30616"/>
    </ligand>
</feature>
<feature type="binding site" evidence="1">
    <location>
        <position position="140"/>
    </location>
    <ligand>
        <name>L-tryptophan</name>
        <dbReference type="ChEBI" id="CHEBI:57912"/>
    </ligand>
</feature>
<feature type="binding site" evidence="1">
    <location>
        <begin position="152"/>
        <end position="154"/>
    </location>
    <ligand>
        <name>ATP</name>
        <dbReference type="ChEBI" id="CHEBI:30616"/>
    </ligand>
</feature>
<feature type="binding site" evidence="1">
    <location>
        <position position="191"/>
    </location>
    <ligand>
        <name>ATP</name>
        <dbReference type="ChEBI" id="CHEBI:30616"/>
    </ligand>
</feature>
<feature type="binding site" evidence="1">
    <location>
        <begin position="200"/>
        <end position="204"/>
    </location>
    <ligand>
        <name>ATP</name>
        <dbReference type="ChEBI" id="CHEBI:30616"/>
    </ligand>
</feature>